<name>LSM6_HUMAN</name>
<protein>
    <recommendedName>
        <fullName>U6 snRNA-associated Sm-like protein LSm6</fullName>
    </recommendedName>
</protein>
<organism>
    <name type="scientific">Homo sapiens</name>
    <name type="common">Human</name>
    <dbReference type="NCBI Taxonomy" id="9606"/>
    <lineage>
        <taxon>Eukaryota</taxon>
        <taxon>Metazoa</taxon>
        <taxon>Chordata</taxon>
        <taxon>Craniata</taxon>
        <taxon>Vertebrata</taxon>
        <taxon>Euteleostomi</taxon>
        <taxon>Mammalia</taxon>
        <taxon>Eutheria</taxon>
        <taxon>Euarchontoglires</taxon>
        <taxon>Primates</taxon>
        <taxon>Haplorrhini</taxon>
        <taxon>Catarrhini</taxon>
        <taxon>Hominidae</taxon>
        <taxon>Homo</taxon>
    </lineage>
</organism>
<evidence type="ECO:0000255" key="1">
    <source>
        <dbReference type="PROSITE-ProRule" id="PRU01346"/>
    </source>
</evidence>
<evidence type="ECO:0000269" key="2">
    <source>
    </source>
</evidence>
<evidence type="ECO:0000269" key="3">
    <source>
    </source>
</evidence>
<evidence type="ECO:0000269" key="4">
    <source>
    </source>
</evidence>
<evidence type="ECO:0000269" key="5">
    <source>
    </source>
</evidence>
<evidence type="ECO:0000305" key="6"/>
<evidence type="ECO:0000305" key="7">
    <source>
    </source>
</evidence>
<evidence type="ECO:0007744" key="8">
    <source>
        <dbReference type="PDB" id="3JCR"/>
    </source>
</evidence>
<evidence type="ECO:0007744" key="9">
    <source>
        <dbReference type="PDB" id="5O9Z"/>
    </source>
</evidence>
<evidence type="ECO:0007744" key="10">
    <source>
    </source>
</evidence>
<proteinExistence type="evidence at protein level"/>
<feature type="chain" id="PRO_0000125575" description="U6 snRNA-associated Sm-like protein LSm6">
    <location>
        <begin position="1"/>
        <end position="80"/>
    </location>
</feature>
<feature type="domain" description="Sm" evidence="1">
    <location>
        <begin position="7"/>
        <end position="79"/>
    </location>
</feature>
<feature type="modified residue" description="N6-acetyllysine" evidence="10">
    <location>
        <position position="59"/>
    </location>
</feature>
<keyword id="KW-0002">3D-structure</keyword>
<keyword id="KW-0007">Acetylation</keyword>
<keyword id="KW-0963">Cytoplasm</keyword>
<keyword id="KW-0903">Direct protein sequencing</keyword>
<keyword id="KW-0507">mRNA processing</keyword>
<keyword id="KW-0508">mRNA splicing</keyword>
<keyword id="KW-0539">Nucleus</keyword>
<keyword id="KW-1267">Proteomics identification</keyword>
<keyword id="KW-1185">Reference proteome</keyword>
<keyword id="KW-0687">Ribonucleoprotein</keyword>
<keyword id="KW-0694">RNA-binding</keyword>
<keyword id="KW-0698">rRNA processing</keyword>
<keyword id="KW-0747">Spliceosome</keyword>
<keyword id="KW-0819">tRNA processing</keyword>
<dbReference type="EMBL" id="AJ238098">
    <property type="protein sequence ID" value="CAB45869.1"/>
    <property type="molecule type" value="mRNA"/>
</dbReference>
<dbReference type="EMBL" id="AF182292">
    <property type="protein sequence ID" value="AAD56230.1"/>
    <property type="molecule type" value="mRNA"/>
</dbReference>
<dbReference type="EMBL" id="AK312126">
    <property type="protein sequence ID" value="BAG35062.1"/>
    <property type="molecule type" value="mRNA"/>
</dbReference>
<dbReference type="EMBL" id="AC097372">
    <property type="protein sequence ID" value="AAY41032.1"/>
    <property type="molecule type" value="Genomic_DNA"/>
</dbReference>
<dbReference type="EMBL" id="CH471056">
    <property type="protein sequence ID" value="EAX05029.1"/>
    <property type="molecule type" value="Genomic_DNA"/>
</dbReference>
<dbReference type="EMBL" id="CH471056">
    <property type="protein sequence ID" value="EAX05030.1"/>
    <property type="molecule type" value="Genomic_DNA"/>
</dbReference>
<dbReference type="EMBL" id="CH471056">
    <property type="protein sequence ID" value="EAX05031.1"/>
    <property type="molecule type" value="Genomic_DNA"/>
</dbReference>
<dbReference type="EMBL" id="BC016026">
    <property type="protein sequence ID" value="AAH16026.1"/>
    <property type="molecule type" value="mRNA"/>
</dbReference>
<dbReference type="CCDS" id="CCDS3767.1"/>
<dbReference type="RefSeq" id="NP_009011.1">
    <property type="nucleotide sequence ID" value="NM_007080.3"/>
</dbReference>
<dbReference type="RefSeq" id="XP_016863161.1">
    <property type="nucleotide sequence ID" value="XM_017007672.2"/>
</dbReference>
<dbReference type="RefSeq" id="XP_016863162.1">
    <property type="nucleotide sequence ID" value="XM_017007673.2"/>
</dbReference>
<dbReference type="RefSeq" id="XP_054204810.1">
    <property type="nucleotide sequence ID" value="XM_054348835.1"/>
</dbReference>
<dbReference type="RefSeq" id="XP_054204811.1">
    <property type="nucleotide sequence ID" value="XM_054348836.1"/>
</dbReference>
<dbReference type="PDB" id="3JCR">
    <property type="method" value="EM"/>
    <property type="resolution" value="7.00 A"/>
    <property type="chains" value="6=1-80"/>
</dbReference>
<dbReference type="PDB" id="5O9Z">
    <property type="method" value="EM"/>
    <property type="resolution" value="4.50 A"/>
    <property type="chains" value="s=1-80"/>
</dbReference>
<dbReference type="PDB" id="6AH0">
    <property type="method" value="EM"/>
    <property type="resolution" value="5.70 A"/>
    <property type="chains" value="x=1-80"/>
</dbReference>
<dbReference type="PDB" id="6AHD">
    <property type="method" value="EM"/>
    <property type="resolution" value="3.80 A"/>
    <property type="chains" value="x=1-80"/>
</dbReference>
<dbReference type="PDB" id="6QW6">
    <property type="method" value="EM"/>
    <property type="resolution" value="2.92 A"/>
    <property type="chains" value="66=1-80"/>
</dbReference>
<dbReference type="PDB" id="6QX9">
    <property type="method" value="EM"/>
    <property type="resolution" value="3.28 A"/>
    <property type="chains" value="66=1-80"/>
</dbReference>
<dbReference type="PDB" id="7ABG">
    <property type="method" value="EM"/>
    <property type="resolution" value="7.80 A"/>
    <property type="chains" value="J=1-80"/>
</dbReference>
<dbReference type="PDB" id="8H6E">
    <property type="method" value="EM"/>
    <property type="resolution" value="3.20 A"/>
    <property type="chains" value="6e=1-80"/>
</dbReference>
<dbReference type="PDB" id="8H6J">
    <property type="method" value="EM"/>
    <property type="resolution" value="3.25 A"/>
    <property type="chains" value="6e=1-80"/>
</dbReference>
<dbReference type="PDB" id="8H6K">
    <property type="method" value="EM"/>
    <property type="resolution" value="2.70 A"/>
    <property type="chains" value="6e=1-80"/>
</dbReference>
<dbReference type="PDB" id="8H6L">
    <property type="method" value="EM"/>
    <property type="resolution" value="2.60 A"/>
    <property type="chains" value="6e=1-80"/>
</dbReference>
<dbReference type="PDB" id="8QO9">
    <property type="method" value="EM"/>
    <property type="resolution" value="5.29 A"/>
    <property type="chains" value="66=1-80"/>
</dbReference>
<dbReference type="PDB" id="8QXD">
    <property type="method" value="EM"/>
    <property type="resolution" value="9.60 A"/>
    <property type="chains" value="66=1-80"/>
</dbReference>
<dbReference type="PDB" id="8QZS">
    <property type="method" value="EM"/>
    <property type="resolution" value="4.10 A"/>
    <property type="chains" value="66=1-80"/>
</dbReference>
<dbReference type="PDB" id="8R08">
    <property type="method" value="EM"/>
    <property type="resolution" value="6.10 A"/>
    <property type="chains" value="66=1-80"/>
</dbReference>
<dbReference type="PDB" id="8R09">
    <property type="method" value="EM"/>
    <property type="resolution" value="4.30 A"/>
    <property type="chains" value="66=1-80"/>
</dbReference>
<dbReference type="PDB" id="8R0A">
    <property type="method" value="EM"/>
    <property type="resolution" value="5.80 A"/>
    <property type="chains" value="66=1-80"/>
</dbReference>
<dbReference type="PDB" id="8R0B">
    <property type="method" value="EM"/>
    <property type="resolution" value="4.40 A"/>
    <property type="chains" value="66=1-80"/>
</dbReference>
<dbReference type="PDB" id="8RM5">
    <property type="method" value="EM"/>
    <property type="resolution" value="6.90 A"/>
    <property type="chains" value="66=1-80"/>
</dbReference>
<dbReference type="PDBsum" id="3JCR"/>
<dbReference type="PDBsum" id="5O9Z"/>
<dbReference type="PDBsum" id="6AH0"/>
<dbReference type="PDBsum" id="6AHD"/>
<dbReference type="PDBsum" id="6QW6"/>
<dbReference type="PDBsum" id="6QX9"/>
<dbReference type="PDBsum" id="7ABG"/>
<dbReference type="PDBsum" id="8H6E"/>
<dbReference type="PDBsum" id="8H6J"/>
<dbReference type="PDBsum" id="8H6K"/>
<dbReference type="PDBsum" id="8H6L"/>
<dbReference type="PDBsum" id="8QO9"/>
<dbReference type="PDBsum" id="8QXD"/>
<dbReference type="PDBsum" id="8QZS"/>
<dbReference type="PDBsum" id="8R08"/>
<dbReference type="PDBsum" id="8R09"/>
<dbReference type="PDBsum" id="8R0A"/>
<dbReference type="PDBsum" id="8R0B"/>
<dbReference type="PDBsum" id="8RM5"/>
<dbReference type="EMDB" id="EMD-11695"/>
<dbReference type="EMDB" id="EMD-18529"/>
<dbReference type="EMDB" id="EMD-18718"/>
<dbReference type="EMDB" id="EMD-18781"/>
<dbReference type="EMDB" id="EMD-18786"/>
<dbReference type="EMDB" id="EMD-18787"/>
<dbReference type="EMDB" id="EMD-18788"/>
<dbReference type="EMDB" id="EMD-18789"/>
<dbReference type="EMDB" id="EMD-19349"/>
<dbReference type="EMDB" id="EMD-34500"/>
<dbReference type="EMDB" id="EMD-34505"/>
<dbReference type="EMDB" id="EMD-34507"/>
<dbReference type="EMDB" id="EMD-34508"/>
<dbReference type="EMDB" id="EMD-3766"/>
<dbReference type="EMDB" id="EMD-4658"/>
<dbReference type="EMDB" id="EMD-4665"/>
<dbReference type="EMDB" id="EMD-9621"/>
<dbReference type="EMDB" id="EMD-9624"/>
<dbReference type="SMR" id="P62312"/>
<dbReference type="BioGRID" id="116328">
    <property type="interactions" value="98"/>
</dbReference>
<dbReference type="ComplexPortal" id="CPX-2391">
    <property type="entry name" value="U4/U6.U5 small nuclear ribonucleoprotein complex"/>
</dbReference>
<dbReference type="CORUM" id="P62312"/>
<dbReference type="DIP" id="DIP-31128N"/>
<dbReference type="FunCoup" id="P62312">
    <property type="interactions" value="2144"/>
</dbReference>
<dbReference type="IntAct" id="P62312">
    <property type="interactions" value="59"/>
</dbReference>
<dbReference type="MINT" id="P62312"/>
<dbReference type="STRING" id="9606.ENSP00000296581"/>
<dbReference type="DrugBank" id="DB04272">
    <property type="generic name" value="Citric acid"/>
</dbReference>
<dbReference type="DrugBank" id="DB02745">
    <property type="generic name" value="Uridine"/>
</dbReference>
<dbReference type="DrugBank" id="DB03685">
    <property type="generic name" value="Uridine monophosphate"/>
</dbReference>
<dbReference type="GlyGen" id="P62312">
    <property type="glycosylation" value="1 site, 1 O-linked glycan (1 site)"/>
</dbReference>
<dbReference type="iPTMnet" id="P62312"/>
<dbReference type="PhosphoSitePlus" id="P62312"/>
<dbReference type="SwissPalm" id="P62312"/>
<dbReference type="BioMuta" id="LSM6"/>
<dbReference type="DMDM" id="61227727"/>
<dbReference type="jPOST" id="P62312"/>
<dbReference type="MassIVE" id="P62312"/>
<dbReference type="PaxDb" id="9606-ENSP00000422392"/>
<dbReference type="PeptideAtlas" id="P62312"/>
<dbReference type="ProteomicsDB" id="57390"/>
<dbReference type="Pumba" id="P62312"/>
<dbReference type="TopDownProteomics" id="P62312"/>
<dbReference type="Antibodypedia" id="27518">
    <property type="antibodies" value="100 antibodies from 20 providers"/>
</dbReference>
<dbReference type="DNASU" id="11157"/>
<dbReference type="Ensembl" id="ENST00000296581.11">
    <property type="protein sequence ID" value="ENSP00000296581.5"/>
    <property type="gene ID" value="ENSG00000164167.12"/>
</dbReference>
<dbReference type="Ensembl" id="ENST00000502781.5">
    <property type="protein sequence ID" value="ENSP00000422392.1"/>
    <property type="gene ID" value="ENSG00000164167.12"/>
</dbReference>
<dbReference type="Ensembl" id="ENST00000504181.1">
    <property type="protein sequence ID" value="ENSP00000420929.1"/>
    <property type="gene ID" value="ENSG00000164167.12"/>
</dbReference>
<dbReference type="Ensembl" id="ENST00000515311.5">
    <property type="protein sequence ID" value="ENSP00000427036.1"/>
    <property type="gene ID" value="ENSG00000164167.12"/>
</dbReference>
<dbReference type="Ensembl" id="ENST00000649747.1">
    <property type="protein sequence ID" value="ENSP00000497311.1"/>
    <property type="gene ID" value="ENSG00000164167.12"/>
</dbReference>
<dbReference type="GeneID" id="11157"/>
<dbReference type="KEGG" id="hsa:11157"/>
<dbReference type="MANE-Select" id="ENST00000296581.11">
    <property type="protein sequence ID" value="ENSP00000296581.5"/>
    <property type="RefSeq nucleotide sequence ID" value="NM_007080.3"/>
    <property type="RefSeq protein sequence ID" value="NP_009011.1"/>
</dbReference>
<dbReference type="UCSC" id="uc003ikq.5">
    <property type="organism name" value="human"/>
</dbReference>
<dbReference type="AGR" id="HGNC:17017"/>
<dbReference type="CTD" id="11157"/>
<dbReference type="GeneCards" id="LSM6"/>
<dbReference type="HGNC" id="HGNC:17017">
    <property type="gene designation" value="LSM6"/>
</dbReference>
<dbReference type="HPA" id="ENSG00000164167">
    <property type="expression patterns" value="Low tissue specificity"/>
</dbReference>
<dbReference type="MIM" id="607286">
    <property type="type" value="gene"/>
</dbReference>
<dbReference type="neXtProt" id="NX_P62312"/>
<dbReference type="OpenTargets" id="ENSG00000164167"/>
<dbReference type="PharmGKB" id="PA128394584"/>
<dbReference type="VEuPathDB" id="HostDB:ENSG00000164167"/>
<dbReference type="eggNOG" id="KOG1783">
    <property type="taxonomic scope" value="Eukaryota"/>
</dbReference>
<dbReference type="GeneTree" id="ENSGT00940000154978"/>
<dbReference type="HOGENOM" id="CLU_076902_7_4_1"/>
<dbReference type="InParanoid" id="P62312"/>
<dbReference type="OMA" id="EQTVEYV"/>
<dbReference type="OrthoDB" id="268799at2759"/>
<dbReference type="PAN-GO" id="P62312">
    <property type="GO annotations" value="8 GO annotations based on evolutionary models"/>
</dbReference>
<dbReference type="PhylomeDB" id="P62312"/>
<dbReference type="TreeFam" id="TF313751"/>
<dbReference type="PathwayCommons" id="P62312"/>
<dbReference type="Reactome" id="R-HSA-430039">
    <property type="pathway name" value="mRNA decay by 5' to 3' exoribonuclease"/>
</dbReference>
<dbReference type="Reactome" id="R-HSA-72163">
    <property type="pathway name" value="mRNA Splicing - Major Pathway"/>
</dbReference>
<dbReference type="SignaLink" id="P62312"/>
<dbReference type="SIGNOR" id="P62312"/>
<dbReference type="BioGRID-ORCS" id="11157">
    <property type="hits" value="696 hits in 1090 CRISPR screens"/>
</dbReference>
<dbReference type="CD-CODE" id="232F8A39">
    <property type="entry name" value="P-body"/>
</dbReference>
<dbReference type="ChiTaRS" id="LSM6">
    <property type="organism name" value="human"/>
</dbReference>
<dbReference type="GeneWiki" id="LSM6"/>
<dbReference type="GenomeRNAi" id="11157"/>
<dbReference type="Pharos" id="P62312">
    <property type="development level" value="Tbio"/>
</dbReference>
<dbReference type="PRO" id="PR:P62312"/>
<dbReference type="Proteomes" id="UP000005640">
    <property type="component" value="Chromosome 4"/>
</dbReference>
<dbReference type="RNAct" id="P62312">
    <property type="molecule type" value="protein"/>
</dbReference>
<dbReference type="Bgee" id="ENSG00000164167">
    <property type="expression patterns" value="Expressed in monocyte and 207 other cell types or tissues"/>
</dbReference>
<dbReference type="GO" id="GO:0005737">
    <property type="term" value="C:cytoplasm"/>
    <property type="evidence" value="ECO:0000314"/>
    <property type="project" value="MGI"/>
</dbReference>
<dbReference type="GO" id="GO:0005829">
    <property type="term" value="C:cytosol"/>
    <property type="evidence" value="ECO:0000304"/>
    <property type="project" value="Reactome"/>
</dbReference>
<dbReference type="GO" id="GO:0120115">
    <property type="term" value="C:Lsm2-8 complex"/>
    <property type="evidence" value="ECO:0000314"/>
    <property type="project" value="UniProtKB"/>
</dbReference>
<dbReference type="GO" id="GO:0005730">
    <property type="term" value="C:nucleolus"/>
    <property type="evidence" value="ECO:0000318"/>
    <property type="project" value="GO_Central"/>
</dbReference>
<dbReference type="GO" id="GO:0005654">
    <property type="term" value="C:nucleoplasm"/>
    <property type="evidence" value="ECO:0000304"/>
    <property type="project" value="Reactome"/>
</dbReference>
<dbReference type="GO" id="GO:0005634">
    <property type="term" value="C:nucleus"/>
    <property type="evidence" value="ECO:0000314"/>
    <property type="project" value="UniProtKB"/>
</dbReference>
<dbReference type="GO" id="GO:0000932">
    <property type="term" value="C:P-body"/>
    <property type="evidence" value="ECO:0000318"/>
    <property type="project" value="GO_Central"/>
</dbReference>
<dbReference type="GO" id="GO:0030532">
    <property type="term" value="C:small nuclear ribonucleoprotein complex"/>
    <property type="evidence" value="ECO:0000304"/>
    <property type="project" value="UniProtKB"/>
</dbReference>
<dbReference type="GO" id="GO:0005732">
    <property type="term" value="C:sno(s)RNA-containing ribonucleoprotein complex"/>
    <property type="evidence" value="ECO:0000318"/>
    <property type="project" value="GO_Central"/>
</dbReference>
<dbReference type="GO" id="GO:0071005">
    <property type="term" value="C:U2-type precatalytic spliceosome"/>
    <property type="evidence" value="ECO:0000314"/>
    <property type="project" value="UniProtKB"/>
</dbReference>
<dbReference type="GO" id="GO:0046540">
    <property type="term" value="C:U4/U6 x U5 tri-snRNP complex"/>
    <property type="evidence" value="ECO:0000314"/>
    <property type="project" value="UniProtKB"/>
</dbReference>
<dbReference type="GO" id="GO:0005688">
    <property type="term" value="C:U6 snRNP"/>
    <property type="evidence" value="ECO:0000318"/>
    <property type="project" value="GO_Central"/>
</dbReference>
<dbReference type="GO" id="GO:0046982">
    <property type="term" value="F:protein heterodimerization activity"/>
    <property type="evidence" value="ECO:0000314"/>
    <property type="project" value="MGI"/>
</dbReference>
<dbReference type="GO" id="GO:0003723">
    <property type="term" value="F:RNA binding"/>
    <property type="evidence" value="ECO:0007005"/>
    <property type="project" value="UniProtKB"/>
</dbReference>
<dbReference type="GO" id="GO:0030490">
    <property type="term" value="P:maturation of SSU-rRNA"/>
    <property type="evidence" value="ECO:0000318"/>
    <property type="project" value="GO_Central"/>
</dbReference>
<dbReference type="GO" id="GO:0006402">
    <property type="term" value="P:mRNA catabolic process"/>
    <property type="evidence" value="ECO:0000314"/>
    <property type="project" value="MGI"/>
</dbReference>
<dbReference type="GO" id="GO:0000398">
    <property type="term" value="P:mRNA splicing, via spliceosome"/>
    <property type="evidence" value="ECO:0000314"/>
    <property type="project" value="UniProtKB"/>
</dbReference>
<dbReference type="GO" id="GO:0008380">
    <property type="term" value="P:RNA splicing"/>
    <property type="evidence" value="ECO:0000304"/>
    <property type="project" value="UniProtKB"/>
</dbReference>
<dbReference type="GO" id="GO:0008033">
    <property type="term" value="P:tRNA processing"/>
    <property type="evidence" value="ECO:0007669"/>
    <property type="project" value="UniProtKB-KW"/>
</dbReference>
<dbReference type="CDD" id="cd01726">
    <property type="entry name" value="LSm6"/>
    <property type="match status" value="1"/>
</dbReference>
<dbReference type="FunFam" id="2.30.30.100:FF:000010">
    <property type="entry name" value="U6 snRNA-associated Sm-like protein LSm6"/>
    <property type="match status" value="1"/>
</dbReference>
<dbReference type="Gene3D" id="2.30.30.100">
    <property type="match status" value="1"/>
</dbReference>
<dbReference type="InterPro" id="IPR016487">
    <property type="entry name" value="Lsm6/sSmF"/>
</dbReference>
<dbReference type="InterPro" id="IPR010920">
    <property type="entry name" value="LSM_dom_sf"/>
</dbReference>
<dbReference type="InterPro" id="IPR047575">
    <property type="entry name" value="Sm"/>
</dbReference>
<dbReference type="InterPro" id="IPR001163">
    <property type="entry name" value="Sm_dom_euk/arc"/>
</dbReference>
<dbReference type="PANTHER" id="PTHR11021">
    <property type="entry name" value="SMALL NUCLEAR RIBONUCLEOPROTEIN F SNRNP-F"/>
    <property type="match status" value="1"/>
</dbReference>
<dbReference type="PANTHER" id="PTHR11021:SF1">
    <property type="entry name" value="U6 SNRNA-ASSOCIATED SM-LIKE PROTEIN LSM6"/>
    <property type="match status" value="1"/>
</dbReference>
<dbReference type="Pfam" id="PF01423">
    <property type="entry name" value="LSM"/>
    <property type="match status" value="1"/>
</dbReference>
<dbReference type="PIRSF" id="PIRSF006609">
    <property type="entry name" value="snRNP_SmF"/>
    <property type="match status" value="1"/>
</dbReference>
<dbReference type="SMART" id="SM00651">
    <property type="entry name" value="Sm"/>
    <property type="match status" value="1"/>
</dbReference>
<dbReference type="SUPFAM" id="SSF50182">
    <property type="entry name" value="Sm-like ribonucleoproteins"/>
    <property type="match status" value="1"/>
</dbReference>
<dbReference type="PROSITE" id="PS52002">
    <property type="entry name" value="SM"/>
    <property type="match status" value="1"/>
</dbReference>
<comment type="function">
    <text evidence="2 5 7">Plays a role in pre-mRNA splicing as component of the U4/U6-U5 tri-snRNP complex that is involved in spliceosome assembly, and as component of the precatalytic spliceosome (spliceosome B complex) (PubMed:28781166). The heptameric LSM2-8 complex binds specifically to the 3'-terminal U-tract of U6 snRNA (PubMed:10523320). Component of LSm protein complexes, which are involved in RNA processing and may function in a chaperone-like manner, facilitating the efficient association of RNA processing factors with their substrates. Component of the cytoplasmic LSM1-LSM7 complex, which is thought to be involved in mRNA degradation by activating the decapping step in the 5'-to-3' mRNA decay pathway (Probable).</text>
</comment>
<comment type="subunit">
    <text evidence="2 3 4 5">Component of the precatalytic spliceosome (spliceosome B complex) (PubMed:28781166). Component of the U4/U6-U5 tri-snRNP complex, a building block of the precatalytic spliceosome (spliceosome B complex) (PubMed:10523320, PubMed:26912367, PubMed:28781166). The U4/U6-U5 tri-snRNP complex is composed of the U4, U6 and U5 snRNAs and at least PRPF3, PRPF4, PRPF6, PRPF8, PRPF31, SNRNP200, TXNL4A, SNRNP40, SNRPB, SNRPD1, SNRPD2, SNRPD3, SNRPE, SNRPF, SNRPG, DDX23, CD2BP2, PPIH, SNU13, EFTUD2, SART1 and USP39, plus LSM2, LSM3, LSM4, LSM5, LSM6, LSM7 and LSM8 (PubMed:26912367). LSM2, LSM3, LSM4, LSM5, LSM6, LSM7 and LSM8 form a heptameric, ring-shaped subcomplex (the LSM2-8 complex) that is part of the U4/U6-U5 tri-snRNP complex and the precatalytic spliceosome (PubMed:10523320, PubMed:26912367, PubMed:28781166). Component of the heptameric LSM1-LSM7 complex, which consists of LSM1, LSM2, LSM3, LSM4, LSM5, LSM6 and LSM7 (PubMed:12515382).</text>
</comment>
<comment type="interaction">
    <interactant intactId="EBI-373310">
        <id>P62312</id>
    </interactant>
    <interactant intactId="EBI-724693">
        <id>P54105</id>
        <label>CLNS1A</label>
    </interactant>
    <organismsDiffer>false</organismsDiffer>
    <experiments>11</experiments>
</comment>
<comment type="interaction">
    <interactant intactId="EBI-373310">
        <id>P62312</id>
    </interactant>
    <interactant intactId="EBI-347619">
        <id>O15116</id>
        <label>LSM1</label>
    </interactant>
    <organismsDiffer>false</organismsDiffer>
    <experiments>6</experiments>
</comment>
<comment type="interaction">
    <interactant intactId="EBI-373310">
        <id>P62312</id>
    </interactant>
    <interactant intactId="EBI-347416">
        <id>Q9Y333</id>
        <label>LSM2</label>
    </interactant>
    <organismsDiffer>false</organismsDiffer>
    <experiments>9</experiments>
</comment>
<comment type="interaction">
    <interactant intactId="EBI-373310">
        <id>P62312</id>
    </interactant>
    <interactant intactId="EBI-348239">
        <id>P62310</id>
        <label>LSM3</label>
    </interactant>
    <organismsDiffer>false</organismsDiffer>
    <experiments>17</experiments>
</comment>
<comment type="interaction">
    <interactant intactId="EBI-373310">
        <id>P62312</id>
    </interactant>
    <interactant intactId="EBI-373007">
        <id>Q9Y4Y9</id>
        <label>LSM5</label>
    </interactant>
    <organismsDiffer>false</organismsDiffer>
    <experiments>15</experiments>
</comment>
<comment type="interaction">
    <interactant intactId="EBI-373310">
        <id>P62312</id>
    </interactant>
    <interactant intactId="EBI-348372">
        <id>Q9UK45</id>
        <label>LSM7</label>
    </interactant>
    <organismsDiffer>false</organismsDiffer>
    <experiments>7</experiments>
</comment>
<comment type="interaction">
    <interactant intactId="EBI-373310">
        <id>P62312</id>
    </interactant>
    <interactant intactId="EBI-347779">
        <id>O95777</id>
        <label>LSM8</label>
    </interactant>
    <organismsDiffer>false</organismsDiffer>
    <experiments>5</experiments>
</comment>
<comment type="interaction">
    <interactant intactId="EBI-373310">
        <id>P62312</id>
    </interactant>
    <interactant intactId="EBI-2562092">
        <id>Q86TB9</id>
        <label>PATL1</label>
    </interactant>
    <organismsDiffer>false</organismsDiffer>
    <experiments>5</experiments>
</comment>
<comment type="interaction">
    <interactant intactId="EBI-373310">
        <id>P62312</id>
    </interactant>
    <interactant intactId="EBI-727004">
        <id>O00560</id>
        <label>SDCBP</label>
    </interactant>
    <organismsDiffer>false</organismsDiffer>
    <experiments>6</experiments>
</comment>
<comment type="interaction">
    <interactant intactId="EBI-373310">
        <id>P62312</id>
    </interactant>
    <interactant intactId="EBI-297993">
        <id>P62316</id>
        <label>SNRPD2</label>
    </interactant>
    <organismsDiffer>false</organismsDiffer>
    <experiments>6</experiments>
</comment>
<comment type="interaction">
    <interactant intactId="EBI-373310">
        <id>P62312</id>
    </interactant>
    <interactant intactId="EBI-356900">
        <id>P62306</id>
        <label>SNRPF</label>
    </interactant>
    <organismsDiffer>false</organismsDiffer>
    <experiments>3</experiments>
</comment>
<comment type="subcellular location">
    <subcellularLocation>
        <location evidence="3">Cytoplasm</location>
    </subcellularLocation>
    <subcellularLocation>
        <location evidence="2 4 5">Nucleus</location>
    </subcellularLocation>
</comment>
<comment type="similarity">
    <text evidence="6">Belongs to the snRNP Sm proteins family. SmF/LSm6 subfamily.</text>
</comment>
<accession>P62312</accession>
<accession>Q4W5J5</accession>
<accession>Q9Y4Y8</accession>
<reference key="1">
    <citation type="journal article" date="1999" name="EMBO J.">
        <title>Sm and Sm-like proteins assemble in two related complexes of deep evolutionary origin.</title>
        <authorList>
            <person name="Salgado-Garrido J."/>
            <person name="Bragado-Nilsson E."/>
            <person name="Kandels-Lewis S."/>
            <person name="Seraphin B."/>
        </authorList>
    </citation>
    <scope>NUCLEOTIDE SEQUENCE [MRNA]</scope>
</reference>
<reference key="2">
    <citation type="journal article" date="1999" name="EMBO J.">
        <title>A doughnut-shaped heteromer of human Sm-like proteins binds to the 3'-end of U6 snRNA, thereby facilitating U4/U6 duplex formation in vitro.</title>
        <authorList>
            <person name="Achsel T."/>
            <person name="Brahms H."/>
            <person name="Kastner B."/>
            <person name="Bachi A."/>
            <person name="Wilm M."/>
            <person name="Luehrmann R."/>
        </authorList>
    </citation>
    <scope>NUCLEOTIDE SEQUENCE [MRNA]</scope>
    <scope>PARTIAL PROTEIN SEQUENCE</scope>
    <scope>IDENTIFICATION IN THE LSM2-LSM8 COMPLEX</scope>
    <scope>SUBUNIT</scope>
    <scope>FUNCTION</scope>
    <scope>SUBCELLULAR LOCATION</scope>
</reference>
<reference key="3">
    <citation type="journal article" date="2004" name="Nat. Genet.">
        <title>Complete sequencing and characterization of 21,243 full-length human cDNAs.</title>
        <authorList>
            <person name="Ota T."/>
            <person name="Suzuki Y."/>
            <person name="Nishikawa T."/>
            <person name="Otsuki T."/>
            <person name="Sugiyama T."/>
            <person name="Irie R."/>
            <person name="Wakamatsu A."/>
            <person name="Hayashi K."/>
            <person name="Sato H."/>
            <person name="Nagai K."/>
            <person name="Kimura K."/>
            <person name="Makita H."/>
            <person name="Sekine M."/>
            <person name="Obayashi M."/>
            <person name="Nishi T."/>
            <person name="Shibahara T."/>
            <person name="Tanaka T."/>
            <person name="Ishii S."/>
            <person name="Yamamoto J."/>
            <person name="Saito K."/>
            <person name="Kawai Y."/>
            <person name="Isono Y."/>
            <person name="Nakamura Y."/>
            <person name="Nagahari K."/>
            <person name="Murakami K."/>
            <person name="Yasuda T."/>
            <person name="Iwayanagi T."/>
            <person name="Wagatsuma M."/>
            <person name="Shiratori A."/>
            <person name="Sudo H."/>
            <person name="Hosoiri T."/>
            <person name="Kaku Y."/>
            <person name="Kodaira H."/>
            <person name="Kondo H."/>
            <person name="Sugawara M."/>
            <person name="Takahashi M."/>
            <person name="Kanda K."/>
            <person name="Yokoi T."/>
            <person name="Furuya T."/>
            <person name="Kikkawa E."/>
            <person name="Omura Y."/>
            <person name="Abe K."/>
            <person name="Kamihara K."/>
            <person name="Katsuta N."/>
            <person name="Sato K."/>
            <person name="Tanikawa M."/>
            <person name="Yamazaki M."/>
            <person name="Ninomiya K."/>
            <person name="Ishibashi T."/>
            <person name="Yamashita H."/>
            <person name="Murakawa K."/>
            <person name="Fujimori K."/>
            <person name="Tanai H."/>
            <person name="Kimata M."/>
            <person name="Watanabe M."/>
            <person name="Hiraoka S."/>
            <person name="Chiba Y."/>
            <person name="Ishida S."/>
            <person name="Ono Y."/>
            <person name="Takiguchi S."/>
            <person name="Watanabe S."/>
            <person name="Yosida M."/>
            <person name="Hotuta T."/>
            <person name="Kusano J."/>
            <person name="Kanehori K."/>
            <person name="Takahashi-Fujii A."/>
            <person name="Hara H."/>
            <person name="Tanase T.-O."/>
            <person name="Nomura Y."/>
            <person name="Togiya S."/>
            <person name="Komai F."/>
            <person name="Hara R."/>
            <person name="Takeuchi K."/>
            <person name="Arita M."/>
            <person name="Imose N."/>
            <person name="Musashino K."/>
            <person name="Yuuki H."/>
            <person name="Oshima A."/>
            <person name="Sasaki N."/>
            <person name="Aotsuka S."/>
            <person name="Yoshikawa Y."/>
            <person name="Matsunawa H."/>
            <person name="Ichihara T."/>
            <person name="Shiohata N."/>
            <person name="Sano S."/>
            <person name="Moriya S."/>
            <person name="Momiyama H."/>
            <person name="Satoh N."/>
            <person name="Takami S."/>
            <person name="Terashima Y."/>
            <person name="Suzuki O."/>
            <person name="Nakagawa S."/>
            <person name="Senoh A."/>
            <person name="Mizoguchi H."/>
            <person name="Goto Y."/>
            <person name="Shimizu F."/>
            <person name="Wakebe H."/>
            <person name="Hishigaki H."/>
            <person name="Watanabe T."/>
            <person name="Sugiyama A."/>
            <person name="Takemoto M."/>
            <person name="Kawakami B."/>
            <person name="Yamazaki M."/>
            <person name="Watanabe K."/>
            <person name="Kumagai A."/>
            <person name="Itakura S."/>
            <person name="Fukuzumi Y."/>
            <person name="Fujimori Y."/>
            <person name="Komiyama M."/>
            <person name="Tashiro H."/>
            <person name="Tanigami A."/>
            <person name="Fujiwara T."/>
            <person name="Ono T."/>
            <person name="Yamada K."/>
            <person name="Fujii Y."/>
            <person name="Ozaki K."/>
            <person name="Hirao M."/>
            <person name="Ohmori Y."/>
            <person name="Kawabata A."/>
            <person name="Hikiji T."/>
            <person name="Kobatake N."/>
            <person name="Inagaki H."/>
            <person name="Ikema Y."/>
            <person name="Okamoto S."/>
            <person name="Okitani R."/>
            <person name="Kawakami T."/>
            <person name="Noguchi S."/>
            <person name="Itoh T."/>
            <person name="Shigeta K."/>
            <person name="Senba T."/>
            <person name="Matsumura K."/>
            <person name="Nakajima Y."/>
            <person name="Mizuno T."/>
            <person name="Morinaga M."/>
            <person name="Sasaki M."/>
            <person name="Togashi T."/>
            <person name="Oyama M."/>
            <person name="Hata H."/>
            <person name="Watanabe M."/>
            <person name="Komatsu T."/>
            <person name="Mizushima-Sugano J."/>
            <person name="Satoh T."/>
            <person name="Shirai Y."/>
            <person name="Takahashi Y."/>
            <person name="Nakagawa K."/>
            <person name="Okumura K."/>
            <person name="Nagase T."/>
            <person name="Nomura N."/>
            <person name="Kikuchi H."/>
            <person name="Masuho Y."/>
            <person name="Yamashita R."/>
            <person name="Nakai K."/>
            <person name="Yada T."/>
            <person name="Nakamura Y."/>
            <person name="Ohara O."/>
            <person name="Isogai T."/>
            <person name="Sugano S."/>
        </authorList>
    </citation>
    <scope>NUCLEOTIDE SEQUENCE [LARGE SCALE MRNA]</scope>
</reference>
<reference key="4">
    <citation type="journal article" date="2005" name="Nature">
        <title>Generation and annotation of the DNA sequences of human chromosomes 2 and 4.</title>
        <authorList>
            <person name="Hillier L.W."/>
            <person name="Graves T.A."/>
            <person name="Fulton R.S."/>
            <person name="Fulton L.A."/>
            <person name="Pepin K.H."/>
            <person name="Minx P."/>
            <person name="Wagner-McPherson C."/>
            <person name="Layman D."/>
            <person name="Wylie K."/>
            <person name="Sekhon M."/>
            <person name="Becker M.C."/>
            <person name="Fewell G.A."/>
            <person name="Delehaunty K.D."/>
            <person name="Miner T.L."/>
            <person name="Nash W.E."/>
            <person name="Kremitzki C."/>
            <person name="Oddy L."/>
            <person name="Du H."/>
            <person name="Sun H."/>
            <person name="Bradshaw-Cordum H."/>
            <person name="Ali J."/>
            <person name="Carter J."/>
            <person name="Cordes M."/>
            <person name="Harris A."/>
            <person name="Isak A."/>
            <person name="van Brunt A."/>
            <person name="Nguyen C."/>
            <person name="Du F."/>
            <person name="Courtney L."/>
            <person name="Kalicki J."/>
            <person name="Ozersky P."/>
            <person name="Abbott S."/>
            <person name="Armstrong J."/>
            <person name="Belter E.A."/>
            <person name="Caruso L."/>
            <person name="Cedroni M."/>
            <person name="Cotton M."/>
            <person name="Davidson T."/>
            <person name="Desai A."/>
            <person name="Elliott G."/>
            <person name="Erb T."/>
            <person name="Fronick C."/>
            <person name="Gaige T."/>
            <person name="Haakenson W."/>
            <person name="Haglund K."/>
            <person name="Holmes A."/>
            <person name="Harkins R."/>
            <person name="Kim K."/>
            <person name="Kruchowski S.S."/>
            <person name="Strong C.M."/>
            <person name="Grewal N."/>
            <person name="Goyea E."/>
            <person name="Hou S."/>
            <person name="Levy A."/>
            <person name="Martinka S."/>
            <person name="Mead K."/>
            <person name="McLellan M.D."/>
            <person name="Meyer R."/>
            <person name="Randall-Maher J."/>
            <person name="Tomlinson C."/>
            <person name="Dauphin-Kohlberg S."/>
            <person name="Kozlowicz-Reilly A."/>
            <person name="Shah N."/>
            <person name="Swearengen-Shahid S."/>
            <person name="Snider J."/>
            <person name="Strong J.T."/>
            <person name="Thompson J."/>
            <person name="Yoakum M."/>
            <person name="Leonard S."/>
            <person name="Pearman C."/>
            <person name="Trani L."/>
            <person name="Radionenko M."/>
            <person name="Waligorski J.E."/>
            <person name="Wang C."/>
            <person name="Rock S.M."/>
            <person name="Tin-Wollam A.-M."/>
            <person name="Maupin R."/>
            <person name="Latreille P."/>
            <person name="Wendl M.C."/>
            <person name="Yang S.-P."/>
            <person name="Pohl C."/>
            <person name="Wallis J.W."/>
            <person name="Spieth J."/>
            <person name="Bieri T.A."/>
            <person name="Berkowicz N."/>
            <person name="Nelson J.O."/>
            <person name="Osborne J."/>
            <person name="Ding L."/>
            <person name="Meyer R."/>
            <person name="Sabo A."/>
            <person name="Shotland Y."/>
            <person name="Sinha P."/>
            <person name="Wohldmann P.E."/>
            <person name="Cook L.L."/>
            <person name="Hickenbotham M.T."/>
            <person name="Eldred J."/>
            <person name="Williams D."/>
            <person name="Jones T.A."/>
            <person name="She X."/>
            <person name="Ciccarelli F.D."/>
            <person name="Izaurralde E."/>
            <person name="Taylor J."/>
            <person name="Schmutz J."/>
            <person name="Myers R.M."/>
            <person name="Cox D.R."/>
            <person name="Huang X."/>
            <person name="McPherson J.D."/>
            <person name="Mardis E.R."/>
            <person name="Clifton S.W."/>
            <person name="Warren W.C."/>
            <person name="Chinwalla A.T."/>
            <person name="Eddy S.R."/>
            <person name="Marra M.A."/>
            <person name="Ovcharenko I."/>
            <person name="Furey T.S."/>
            <person name="Miller W."/>
            <person name="Eichler E.E."/>
            <person name="Bork P."/>
            <person name="Suyama M."/>
            <person name="Torrents D."/>
            <person name="Waterston R.H."/>
            <person name="Wilson R.K."/>
        </authorList>
    </citation>
    <scope>NUCLEOTIDE SEQUENCE [LARGE SCALE GENOMIC DNA]</scope>
</reference>
<reference key="5">
    <citation type="submission" date="2005-09" db="EMBL/GenBank/DDBJ databases">
        <authorList>
            <person name="Mural R.J."/>
            <person name="Istrail S."/>
            <person name="Sutton G."/>
            <person name="Florea L."/>
            <person name="Halpern A.L."/>
            <person name="Mobarry C.M."/>
            <person name="Lippert R."/>
            <person name="Walenz B."/>
            <person name="Shatkay H."/>
            <person name="Dew I."/>
            <person name="Miller J.R."/>
            <person name="Flanigan M.J."/>
            <person name="Edwards N.J."/>
            <person name="Bolanos R."/>
            <person name="Fasulo D."/>
            <person name="Halldorsson B.V."/>
            <person name="Hannenhalli S."/>
            <person name="Turner R."/>
            <person name="Yooseph S."/>
            <person name="Lu F."/>
            <person name="Nusskern D.R."/>
            <person name="Shue B.C."/>
            <person name="Zheng X.H."/>
            <person name="Zhong F."/>
            <person name="Delcher A.L."/>
            <person name="Huson D.H."/>
            <person name="Kravitz S.A."/>
            <person name="Mouchard L."/>
            <person name="Reinert K."/>
            <person name="Remington K.A."/>
            <person name="Clark A.G."/>
            <person name="Waterman M.S."/>
            <person name="Eichler E.E."/>
            <person name="Adams M.D."/>
            <person name="Hunkapiller M.W."/>
            <person name="Myers E.W."/>
            <person name="Venter J.C."/>
        </authorList>
    </citation>
    <scope>NUCLEOTIDE SEQUENCE [LARGE SCALE GENOMIC DNA]</scope>
</reference>
<reference key="6">
    <citation type="journal article" date="2004" name="Genome Res.">
        <title>The status, quality, and expansion of the NIH full-length cDNA project: the Mammalian Gene Collection (MGC).</title>
        <authorList>
            <consortium name="The MGC Project Team"/>
        </authorList>
    </citation>
    <scope>NUCLEOTIDE SEQUENCE [LARGE SCALE MRNA]</scope>
    <source>
        <tissue>Uterus</tissue>
    </source>
</reference>
<reference key="7">
    <citation type="journal article" date="2002" name="RNA">
        <title>The human LSm1-7 proteins colocalize with the mRNA-degrading enzymes Dcp1/2 and Xrnl in distinct cytoplasmic foci.</title>
        <authorList>
            <person name="Ingelfinger D."/>
            <person name="Arndt-Jovin D.J."/>
            <person name="Luehrmann R."/>
            <person name="Achsel T."/>
        </authorList>
    </citation>
    <scope>PROBABLE FUNCTION IN MRNA DEGRADATION</scope>
    <scope>SUBCELLULAR LOCATION</scope>
    <scope>IDENTIFICATION IN THE LSM1-LSM7 COMPLEX</scope>
</reference>
<reference key="8">
    <citation type="journal article" date="2009" name="Science">
        <title>Lysine acetylation targets protein complexes and co-regulates major cellular functions.</title>
        <authorList>
            <person name="Choudhary C."/>
            <person name="Kumar C."/>
            <person name="Gnad F."/>
            <person name="Nielsen M.L."/>
            <person name="Rehman M."/>
            <person name="Walther T.C."/>
            <person name="Olsen J.V."/>
            <person name="Mann M."/>
        </authorList>
    </citation>
    <scope>ACETYLATION [LARGE SCALE ANALYSIS] AT LYS-59</scope>
    <scope>IDENTIFICATION BY MASS SPECTROMETRY [LARGE SCALE ANALYSIS]</scope>
</reference>
<reference key="9">
    <citation type="journal article" date="2011" name="BMC Syst. Biol.">
        <title>Initial characterization of the human central proteome.</title>
        <authorList>
            <person name="Burkard T.R."/>
            <person name="Planyavsky M."/>
            <person name="Kaupe I."/>
            <person name="Breitwieser F.P."/>
            <person name="Buerckstuemmer T."/>
            <person name="Bennett K.L."/>
            <person name="Superti-Furga G."/>
            <person name="Colinge J."/>
        </authorList>
    </citation>
    <scope>IDENTIFICATION BY MASS SPECTROMETRY [LARGE SCALE ANALYSIS]</scope>
</reference>
<reference evidence="8" key="10">
    <citation type="journal article" date="2016" name="Science">
        <title>Molecular architecture of the human U4/U6.U5 tri-snRNP.</title>
        <authorList>
            <person name="Agafonov D.E."/>
            <person name="Kastner B."/>
            <person name="Dybkov O."/>
            <person name="Hofele R.V."/>
            <person name="Liu W.T."/>
            <person name="Urlaub H."/>
            <person name="Luhrmann R."/>
            <person name="Stark H."/>
        </authorList>
    </citation>
    <scope>STRUCTURE BY ELECTRON MICROSCOPY (7.00 ANGSTROMS)</scope>
    <scope>SUBCELLULAR LOCATION</scope>
    <scope>SUBUNIT</scope>
    <scope>IDENTIFICATION BY MASS SPECTROMETRY</scope>
</reference>
<reference evidence="9" key="11">
    <citation type="journal article" date="2017" name="Cell">
        <title>Cryo-EM Structure of a Pre-catalytic Human Spliceosome Primed for Activation.</title>
        <authorList>
            <person name="Bertram K."/>
            <person name="Agafonov D.E."/>
            <person name="Dybkov O."/>
            <person name="Haselbach D."/>
            <person name="Leelaram M.N."/>
            <person name="Will C.L."/>
            <person name="Urlaub H."/>
            <person name="Kastner B."/>
            <person name="Luhrmann R."/>
            <person name="Stark H."/>
        </authorList>
    </citation>
    <scope>STRUCTURE BY ELECTRON MICROSCOPY (4.50 ANGSTROMS)</scope>
    <scope>FUNCTION</scope>
    <scope>SUBCELLULAR LOCATION</scope>
    <scope>SUBUNIT</scope>
    <scope>IDENTIFICATION BY MASS SPECTROMETRY</scope>
</reference>
<gene>
    <name type="primary">LSM6</name>
</gene>
<sequence>MSLRKQTPSDFLKQIIGRPVVVKLNSGVDYRGVLACLDGYMNIALEQTEEYVNGQLKNKYGDAFIRGNNVLYISTQKRRM</sequence>